<sequence length="163" mass="18376">MSTSQPDDSNNRIVAVTLDEESIGRSGPDIEHERAIAIYDLVEKNLFAPEGAGDGPFTLHIGITGSRLMFDIRREDGAPVITHLLSLSPFRRIVKDYFMICDSYYQAIRTATPDKIEAIDMGRRGIHDEGSRTLQERLSGKVRIDFETARRLFTLISVLHWKG</sequence>
<dbReference type="EMBL" id="CP000283">
    <property type="protein sequence ID" value="ABE41495.1"/>
    <property type="molecule type" value="Genomic_DNA"/>
</dbReference>
<dbReference type="STRING" id="316057.RPD_4278"/>
<dbReference type="KEGG" id="rpd:RPD_4278"/>
<dbReference type="eggNOG" id="COG5328">
    <property type="taxonomic scope" value="Bacteria"/>
</dbReference>
<dbReference type="HOGENOM" id="CLU_112904_0_0_5"/>
<dbReference type="BioCyc" id="RPAL316057:RPD_RS21515-MONOMER"/>
<dbReference type="Proteomes" id="UP000001818">
    <property type="component" value="Chromosome"/>
</dbReference>
<dbReference type="HAMAP" id="MF_00678">
    <property type="entry name" value="UPF0262"/>
    <property type="match status" value="1"/>
</dbReference>
<dbReference type="InterPro" id="IPR008321">
    <property type="entry name" value="UCP032146"/>
</dbReference>
<dbReference type="NCBIfam" id="NF002769">
    <property type="entry name" value="PRK02853.1"/>
    <property type="match status" value="1"/>
</dbReference>
<dbReference type="Pfam" id="PF06793">
    <property type="entry name" value="UPF0262"/>
    <property type="match status" value="1"/>
</dbReference>
<dbReference type="PIRSF" id="PIRSF032146">
    <property type="entry name" value="UCP032146"/>
    <property type="match status" value="1"/>
</dbReference>
<gene>
    <name type="ordered locus">RPD_4278</name>
</gene>
<protein>
    <recommendedName>
        <fullName evidence="1">UPF0262 protein RPD_4278</fullName>
    </recommendedName>
</protein>
<evidence type="ECO:0000255" key="1">
    <source>
        <dbReference type="HAMAP-Rule" id="MF_00678"/>
    </source>
</evidence>
<organism>
    <name type="scientific">Rhodopseudomonas palustris (strain BisB5)</name>
    <dbReference type="NCBI Taxonomy" id="316057"/>
    <lineage>
        <taxon>Bacteria</taxon>
        <taxon>Pseudomonadati</taxon>
        <taxon>Pseudomonadota</taxon>
        <taxon>Alphaproteobacteria</taxon>
        <taxon>Hyphomicrobiales</taxon>
        <taxon>Nitrobacteraceae</taxon>
        <taxon>Rhodopseudomonas</taxon>
    </lineage>
</organism>
<accession>Q130J4</accession>
<proteinExistence type="inferred from homology"/>
<reference key="1">
    <citation type="submission" date="2006-03" db="EMBL/GenBank/DDBJ databases">
        <title>Complete sequence of Rhodopseudomonas palustris BisB5.</title>
        <authorList>
            <consortium name="US DOE Joint Genome Institute"/>
            <person name="Copeland A."/>
            <person name="Lucas S."/>
            <person name="Lapidus A."/>
            <person name="Barry K."/>
            <person name="Detter J.C."/>
            <person name="Glavina del Rio T."/>
            <person name="Hammon N."/>
            <person name="Israni S."/>
            <person name="Dalin E."/>
            <person name="Tice H."/>
            <person name="Pitluck S."/>
            <person name="Chain P."/>
            <person name="Malfatti S."/>
            <person name="Shin M."/>
            <person name="Vergez L."/>
            <person name="Schmutz J."/>
            <person name="Larimer F."/>
            <person name="Land M."/>
            <person name="Hauser L."/>
            <person name="Pelletier D.A."/>
            <person name="Kyrpides N."/>
            <person name="Lykidis A."/>
            <person name="Oda Y."/>
            <person name="Harwood C.S."/>
            <person name="Richardson P."/>
        </authorList>
    </citation>
    <scope>NUCLEOTIDE SEQUENCE [LARGE SCALE GENOMIC DNA]</scope>
    <source>
        <strain>BisB5</strain>
    </source>
</reference>
<name>Y4278_RHOPS</name>
<feature type="chain" id="PRO_0000314213" description="UPF0262 protein RPD_4278">
    <location>
        <begin position="1"/>
        <end position="163"/>
    </location>
</feature>
<comment type="similarity">
    <text evidence="1">Belongs to the UPF0262 family.</text>
</comment>